<proteinExistence type="inferred from homology"/>
<comment type="function">
    <text evidence="1">Core component of nucleosome. Nucleosomes wrap and compact DNA into chromatin, limiting DNA accessibility to the cellular machineries which require DNA as a template. Histones thereby play a central role in transcription regulation, DNA repair, DNA replication and chromosomal stability. DNA accessibility is regulated via a complex set of post-translational modifications of histones, also called histone code, and nucleosome remodeling (By similarity).</text>
</comment>
<comment type="subunit">
    <text evidence="1">The nucleosome is a histone octamer containing two molecules each of H2A, H2B, H3 and H4 assembled in one H3-H4 heterotetramer and two H2A-H2B heterodimers. The octamer wraps approximately 147 bp of DNA (By similarity).</text>
</comment>
<comment type="subcellular location">
    <subcellularLocation>
        <location evidence="1">Nucleus</location>
    </subcellularLocation>
    <subcellularLocation>
        <location evidence="1">Chromosome</location>
    </subcellularLocation>
</comment>
<comment type="PTM">
    <text evidence="1">Phosphorylated by IPL1 to form H3S10ph. H3S10ph promotes subsequent H3K14ac formation and is required for transcriptional activation through TBP recruitment to the promoters (By similarity).</text>
</comment>
<comment type="PTM">
    <text evidence="1">Mono-, di- and trimethylated by the COMPASS complex to form H3K4me1/2/3. H3K4me activates gene expression by regulating transcription elongation and plays a role in telomere length maintenance. H3K4me enrichment correlates with transcription levels, and occurs in a 5' to 3' gradient with H3K4me3 enrichment at the 5'-end of genes, shifting to H3K4me2 and then H3K4me1. Methylated by SET2 to form H3K36me. H3K36me represses gene expression. Methylated by DOT1 to form H3K79me. H3K79me is required for association of SIR proteins with telomeric regions and for telomeric silencing. The COMPASS-mediated formation of H3K4me2/3 and the DOT1-mediated formation of H3K79me require H2BK123ub1 (By similarity).</text>
</comment>
<comment type="PTM">
    <text evidence="1">Acetylation of histone H3 leads to transcriptional activation. H3K14ac formation by GCN5 is promoted by H3S10ph. H3K14ac can also be formed by ESA1. H3K56ac formation occurs predominantly in newly synthesized H3 molecules during G1, S and G2/M of the cell cycle and may be involved in DNA repair (By similarity).</text>
</comment>
<comment type="similarity">
    <text evidence="3">Belongs to the histone H3 family.</text>
</comment>
<comment type="caution">
    <text evidence="3">To ensure consistency between histone entries, we follow the 'Brno' nomenclature for histone modifications, with positions referring to those used in the literature for the 'closest' model organism. Due to slight variations in histone sequences between organisms and to the presence of initiator methionine in UniProtKB/Swiss-Prot sequences, the actual positions of modified amino acids in the sequence generally differ. In this entry the following conventions are used: H3K4me1/2/3 = mono-, di- and trimethylated Lys-5; H3K9ac = acetylated Lys-10; H3K9me1 = monomethylated Lys-10; H3S10ph = phosphorylated Ser-11; H3K14ac = acetylated Lys-15; H3K14me2 = dimethylated Lys-15; H3K18ac = acetylated Lys-19; H3K18me1 = monomethylated Lys-19; H3K23ac = acetylated Lys-24; H3K23me1 = monomethylated Lys-24; H3K27ac = acetylated Lys-28; H3K27me1/2/3 = mono-, di- and trimethylated Lys-28; H3K36ac = acetylated Lys-37; H3K36me1/2/3 = mono-, di- and trimethylated Lys-37; H3K56ac = acetylated Lys-57; H3K64ac = acetylated Lys-65; H3K79me1/2/3 = mono-, di- and trimethylated Lys-80.</text>
</comment>
<reference key="1">
    <citation type="journal article" date="2004" name="Proc. Natl. Acad. Sci. U.S.A.">
        <title>The diploid genome sequence of Candida albicans.</title>
        <authorList>
            <person name="Jones T."/>
            <person name="Federspiel N.A."/>
            <person name="Chibana H."/>
            <person name="Dungan J."/>
            <person name="Kalman S."/>
            <person name="Magee B.B."/>
            <person name="Newport G."/>
            <person name="Thorstenson Y.R."/>
            <person name="Agabian N."/>
            <person name="Magee P.T."/>
            <person name="Davis R.W."/>
            <person name="Scherer S."/>
        </authorList>
    </citation>
    <scope>NUCLEOTIDE SEQUENCE [LARGE SCALE GENOMIC DNA]</scope>
    <source>
        <strain>SC5314 / ATCC MYA-2876</strain>
    </source>
</reference>
<reference key="2">
    <citation type="journal article" date="2007" name="Genome Biol.">
        <title>Assembly of the Candida albicans genome into sixteen supercontigs aligned on the eight chromosomes.</title>
        <authorList>
            <person name="van het Hoog M."/>
            <person name="Rast T.J."/>
            <person name="Martchenko M."/>
            <person name="Grindle S."/>
            <person name="Dignard D."/>
            <person name="Hogues H."/>
            <person name="Cuomo C."/>
            <person name="Berriman M."/>
            <person name="Scherer S."/>
            <person name="Magee B.B."/>
            <person name="Whiteway M."/>
            <person name="Chibana H."/>
            <person name="Nantel A."/>
            <person name="Magee P.T."/>
        </authorList>
    </citation>
    <scope>GENOME REANNOTATION</scope>
    <source>
        <strain>SC5314 / ATCC MYA-2876</strain>
    </source>
</reference>
<reference key="3">
    <citation type="journal article" date="2013" name="Genome Biol.">
        <title>Assembly of a phased diploid Candida albicans genome facilitates allele-specific measurements and provides a simple model for repeat and indel structure.</title>
        <authorList>
            <person name="Muzzey D."/>
            <person name="Schwartz K."/>
            <person name="Weissman J.S."/>
            <person name="Sherlock G."/>
        </authorList>
    </citation>
    <scope>NUCLEOTIDE SEQUENCE [LARGE SCALE GENOMIC DNA]</scope>
    <scope>GENOME REANNOTATION</scope>
    <source>
        <strain>SC5314 / ATCC MYA-2876</strain>
    </source>
</reference>
<gene>
    <name type="primary">HHT3</name>
    <name type="ordered locus">CAALFM_C307090WA</name>
    <name type="ORF">CaO19.14083</name>
    <name type="ORF">CaO19.6791</name>
</gene>
<keyword id="KW-0007">Acetylation</keyword>
<keyword id="KW-0158">Chromosome</keyword>
<keyword id="KW-0238">DNA-binding</keyword>
<keyword id="KW-0488">Methylation</keyword>
<keyword id="KW-0544">Nucleosome core</keyword>
<keyword id="KW-0539">Nucleus</keyword>
<keyword id="KW-0597">Phosphoprotein</keyword>
<keyword id="KW-1185">Reference proteome</keyword>
<organism>
    <name type="scientific">Candida albicans (strain SC5314 / ATCC MYA-2876)</name>
    <name type="common">Yeast</name>
    <dbReference type="NCBI Taxonomy" id="237561"/>
    <lineage>
        <taxon>Eukaryota</taxon>
        <taxon>Fungi</taxon>
        <taxon>Dikarya</taxon>
        <taxon>Ascomycota</taxon>
        <taxon>Saccharomycotina</taxon>
        <taxon>Pichiomycetes</taxon>
        <taxon>Debaryomycetaceae</taxon>
        <taxon>Candida/Lodderomyces clade</taxon>
        <taxon>Candida</taxon>
    </lineage>
</organism>
<name>H33_CANAL</name>
<accession>Q5ADQ0</accession>
<accession>A0A1D8PKQ2</accession>
<dbReference type="EMBL" id="CP017625">
    <property type="protein sequence ID" value="AOW28712.1"/>
    <property type="molecule type" value="Genomic_DNA"/>
</dbReference>
<dbReference type="SMR" id="Q5ADQ0"/>
<dbReference type="FunCoup" id="Q5ADQ0">
    <property type="interactions" value="974"/>
</dbReference>
<dbReference type="STRING" id="237561.Q5ADQ0"/>
<dbReference type="EnsemblFungi" id="C3_07090W_A-T">
    <property type="protein sequence ID" value="C3_07090W_A-T-p1"/>
    <property type="gene ID" value="C3_07090W_A"/>
</dbReference>
<dbReference type="KEGG" id="cal:CAALFM_C307090WA"/>
<dbReference type="CGD" id="CAL0000190019">
    <property type="gene designation" value="HHT1"/>
</dbReference>
<dbReference type="VEuPathDB" id="FungiDB:C3_07090W_A"/>
<dbReference type="eggNOG" id="KOG1745">
    <property type="taxonomic scope" value="Eukaryota"/>
</dbReference>
<dbReference type="HOGENOM" id="CLU_078295_4_0_1"/>
<dbReference type="InParanoid" id="Q5ADQ0"/>
<dbReference type="OrthoDB" id="5326060at2759"/>
<dbReference type="PRO" id="PR:Q5ADQ0"/>
<dbReference type="Proteomes" id="UP000000559">
    <property type="component" value="Chromosome 3"/>
</dbReference>
<dbReference type="GO" id="GO:0000786">
    <property type="term" value="C:nucleosome"/>
    <property type="evidence" value="ECO:0007669"/>
    <property type="project" value="UniProtKB-KW"/>
</dbReference>
<dbReference type="GO" id="GO:0005634">
    <property type="term" value="C:nucleus"/>
    <property type="evidence" value="ECO:0000318"/>
    <property type="project" value="GO_Central"/>
</dbReference>
<dbReference type="GO" id="GO:0003677">
    <property type="term" value="F:DNA binding"/>
    <property type="evidence" value="ECO:0007669"/>
    <property type="project" value="UniProtKB-KW"/>
</dbReference>
<dbReference type="GO" id="GO:0046982">
    <property type="term" value="F:protein heterodimerization activity"/>
    <property type="evidence" value="ECO:0007669"/>
    <property type="project" value="InterPro"/>
</dbReference>
<dbReference type="GO" id="GO:0030527">
    <property type="term" value="F:structural constituent of chromatin"/>
    <property type="evidence" value="ECO:0007669"/>
    <property type="project" value="InterPro"/>
</dbReference>
<dbReference type="GO" id="GO:0009303">
    <property type="term" value="P:rRNA transcription"/>
    <property type="evidence" value="ECO:0000318"/>
    <property type="project" value="GO_Central"/>
</dbReference>
<dbReference type="CDD" id="cd22911">
    <property type="entry name" value="HFD_H3"/>
    <property type="match status" value="1"/>
</dbReference>
<dbReference type="FunFam" id="1.10.20.10:FF:000010">
    <property type="entry name" value="Histone H3"/>
    <property type="match status" value="1"/>
</dbReference>
<dbReference type="Gene3D" id="1.10.20.10">
    <property type="entry name" value="Histone, subunit A"/>
    <property type="match status" value="1"/>
</dbReference>
<dbReference type="InterPro" id="IPR009072">
    <property type="entry name" value="Histone-fold"/>
</dbReference>
<dbReference type="InterPro" id="IPR007125">
    <property type="entry name" value="Histone_H2A/H2B/H3"/>
</dbReference>
<dbReference type="InterPro" id="IPR000164">
    <property type="entry name" value="Histone_H3/CENP-A"/>
</dbReference>
<dbReference type="PANTHER" id="PTHR11426">
    <property type="entry name" value="HISTONE H3"/>
    <property type="match status" value="1"/>
</dbReference>
<dbReference type="Pfam" id="PF00125">
    <property type="entry name" value="Histone"/>
    <property type="match status" value="1"/>
</dbReference>
<dbReference type="PRINTS" id="PR00622">
    <property type="entry name" value="HISTONEH3"/>
</dbReference>
<dbReference type="SMART" id="SM00428">
    <property type="entry name" value="H3"/>
    <property type="match status" value="1"/>
</dbReference>
<dbReference type="SUPFAM" id="SSF47113">
    <property type="entry name" value="Histone-fold"/>
    <property type="match status" value="1"/>
</dbReference>
<dbReference type="PROSITE" id="PS00322">
    <property type="entry name" value="HISTONE_H3_1"/>
    <property type="match status" value="1"/>
</dbReference>
<dbReference type="PROSITE" id="PS00959">
    <property type="entry name" value="HISTONE_H3_2"/>
    <property type="match status" value="1"/>
</dbReference>
<protein>
    <recommendedName>
        <fullName>Histone H3.3</fullName>
    </recommendedName>
</protein>
<feature type="initiator methionine" description="Removed" evidence="1">
    <location>
        <position position="1"/>
    </location>
</feature>
<feature type="chain" id="PRO_0000270587" description="Histone H3.3">
    <location>
        <begin position="2"/>
        <end position="136"/>
    </location>
</feature>
<feature type="region of interest" description="Disordered" evidence="2">
    <location>
        <begin position="1"/>
        <end position="42"/>
    </location>
</feature>
<feature type="modified residue" description="N6,N6,N6-trimethyllysine; alternate" evidence="1">
    <location>
        <position position="5"/>
    </location>
</feature>
<feature type="modified residue" description="N6,N6-dimethyllysine; alternate" evidence="1">
    <location>
        <position position="5"/>
    </location>
</feature>
<feature type="modified residue" description="N6-methyllysine; alternate" evidence="1">
    <location>
        <position position="5"/>
    </location>
</feature>
<feature type="modified residue" description="N6-acetyllysine; alternate" evidence="1">
    <location>
        <position position="10"/>
    </location>
</feature>
<feature type="modified residue" description="N6-methyllysine; alternate" evidence="1">
    <location>
        <position position="10"/>
    </location>
</feature>
<feature type="modified residue" description="Phosphoserine" evidence="1">
    <location>
        <position position="11"/>
    </location>
</feature>
<feature type="modified residue" description="N6,N6-dimethyllysine; alternate" evidence="1">
    <location>
        <position position="15"/>
    </location>
</feature>
<feature type="modified residue" description="N6-acetyllysine; alternate" evidence="1">
    <location>
        <position position="15"/>
    </location>
</feature>
<feature type="modified residue" description="N6-acetyllysine; alternate" evidence="1">
    <location>
        <position position="19"/>
    </location>
</feature>
<feature type="modified residue" description="N6-methyllysine; alternate" evidence="1">
    <location>
        <position position="19"/>
    </location>
</feature>
<feature type="modified residue" description="N6-acetyllysine; alternate" evidence="1">
    <location>
        <position position="24"/>
    </location>
</feature>
<feature type="modified residue" description="N6-methyllysine; alternate" evidence="1">
    <location>
        <position position="24"/>
    </location>
</feature>
<feature type="modified residue" description="N6,N6,N6-trimethyllysine; alternate" evidence="1">
    <location>
        <position position="28"/>
    </location>
</feature>
<feature type="modified residue" description="N6,N6-dimethyllysine; alternate" evidence="1">
    <location>
        <position position="28"/>
    </location>
</feature>
<feature type="modified residue" description="N6-acetyllysine; alternate" evidence="1">
    <location>
        <position position="28"/>
    </location>
</feature>
<feature type="modified residue" description="N6-methyllysine; alternate" evidence="1">
    <location>
        <position position="28"/>
    </location>
</feature>
<feature type="modified residue" description="N6,N6,N6-trimethyllysine; alternate" evidence="1">
    <location>
        <position position="37"/>
    </location>
</feature>
<feature type="modified residue" description="N6,N6-dimethyllysine; alternate" evidence="1">
    <location>
        <position position="37"/>
    </location>
</feature>
<feature type="modified residue" description="N6-acetyllysine; alternate" evidence="1">
    <location>
        <position position="37"/>
    </location>
</feature>
<feature type="modified residue" description="N6-methyllysine; alternate" evidence="1">
    <location>
        <position position="37"/>
    </location>
</feature>
<feature type="modified residue" description="N6-acetyllysine" evidence="1">
    <location>
        <position position="57"/>
    </location>
</feature>
<feature type="modified residue" description="N6-acetyllysine" evidence="1">
    <location>
        <position position="65"/>
    </location>
</feature>
<feature type="modified residue" description="N6,N6,N6-trimethyllysine; alternate" evidence="1">
    <location>
        <position position="80"/>
    </location>
</feature>
<feature type="modified residue" description="N6,N6-dimethyllysine; alternate" evidence="1">
    <location>
        <position position="80"/>
    </location>
</feature>
<feature type="modified residue" description="N6-methyllysine; alternate" evidence="1">
    <location>
        <position position="80"/>
    </location>
</feature>
<sequence length="136" mass="15344">MARTKQTARKSTGGKAPRKQLASKAARKSAPVSGGVKKPHRYKPGTVALREIRRFQKSTELLIRKLPFQRLVREIAQDFKSDLRFQSSAIGALQEAVEAYLVGLFEDTNLCAIHAKRVTIQKKDMQLARRLRGERS</sequence>
<evidence type="ECO:0000250" key="1"/>
<evidence type="ECO:0000256" key="2">
    <source>
        <dbReference type="SAM" id="MobiDB-lite"/>
    </source>
</evidence>
<evidence type="ECO:0000305" key="3"/>